<gene>
    <name evidence="1" type="primary">TRX2</name>
    <name type="ordered locus">26</name>
</gene>
<dbReference type="EMBL" id="X64346">
    <property type="protein sequence ID" value="CAA45649.1"/>
    <property type="molecule type" value="Genomic_DNA"/>
</dbReference>
<dbReference type="RefSeq" id="NP_040228.1">
    <property type="nucleotide sequence ID" value="NC_001350.1"/>
</dbReference>
<dbReference type="SMR" id="Q01008"/>
<dbReference type="KEGG" id="vg:1682465"/>
<dbReference type="Proteomes" id="UP000000587">
    <property type="component" value="Segment"/>
</dbReference>
<dbReference type="GO" id="GO:0042025">
    <property type="term" value="C:host cell nucleus"/>
    <property type="evidence" value="ECO:0007669"/>
    <property type="project" value="UniProtKB-SubCell"/>
</dbReference>
<dbReference type="GO" id="GO:0019028">
    <property type="term" value="C:viral capsid"/>
    <property type="evidence" value="ECO:0007669"/>
    <property type="project" value="UniProtKB-KW"/>
</dbReference>
<dbReference type="GO" id="GO:0005198">
    <property type="term" value="F:structural molecule activity"/>
    <property type="evidence" value="ECO:0007669"/>
    <property type="project" value="InterPro"/>
</dbReference>
<dbReference type="HAMAP" id="MF_04019">
    <property type="entry name" value="HSV_TRX2"/>
    <property type="match status" value="1"/>
</dbReference>
<dbReference type="InterPro" id="IPR002690">
    <property type="entry name" value="Herpes_capsid_2"/>
</dbReference>
<dbReference type="Pfam" id="PF01802">
    <property type="entry name" value="Herpes_V23"/>
    <property type="match status" value="1"/>
</dbReference>
<accession>Q01008</accession>
<feature type="chain" id="PRO_0000115731" description="Triplex capsid protein 2">
    <location>
        <begin position="1"/>
        <end position="304"/>
    </location>
</feature>
<organismHost>
    <name type="scientific">Saimiri sciureus</name>
    <name type="common">Common squirrel monkey</name>
    <dbReference type="NCBI Taxonomy" id="9521"/>
</organismHost>
<proteinExistence type="inferred from homology"/>
<evidence type="ECO:0000255" key="1">
    <source>
        <dbReference type="HAMAP-Rule" id="MF_04019"/>
    </source>
</evidence>
<keyword id="KW-0167">Capsid protein</keyword>
<keyword id="KW-1048">Host nucleus</keyword>
<keyword id="KW-1185">Reference proteome</keyword>
<keyword id="KW-0946">Virion</keyword>
<name>TRX2_SHV21</name>
<protein>
    <recommendedName>
        <fullName evidence="1">Triplex capsid protein 2</fullName>
    </recommendedName>
</protein>
<sequence>MLTDKTIIVSLTSRLFADEITKLQKKIGSILPLQDPHKLQSLDTLGLNAVCSRDVFPDYVHMFSYLSKCTLAILEEVNPDNLILTRLDPSETYQIKNVYEPMFQWDGFSNLTVIPPVFGRQQATVTLESNGFDLVFPSVVPSDLAQAIIGKLLLYNLYSRLVESDPEINIEEVNMYTTNVTHMGRHYVLDINHNNPNEALKSLDDLAVYTCILSALIPRACLRVLTILMRHDQHELLDVFRGIVPREVYEIDANALSIGDDITRMTTFITYLQSLSSIFNLGAKLHLSSYASETQTATCWISYC</sequence>
<comment type="function">
    <text evidence="1">Structural component of the T=16 icosahedral capsid. The capsid is composed of pentamers and hexamers of major capsid protein/MCP, which are linked together by heterotrimers called triplexes. These triplexes are formed by a single molecule of triplex protein 1/TRX1 and two copies of triplex protein 2/TRX2. Additionally, TRX1 is required for efficient transport of TRX2 to the nucleus, which is the site of capsid assembly.</text>
</comment>
<comment type="subunit">
    <text evidence="1">Interacts with TRX1 and major capisd protein/MCP.</text>
</comment>
<comment type="subcellular location">
    <subcellularLocation>
        <location evidence="1">Virion</location>
    </subcellularLocation>
    <subcellularLocation>
        <location evidence="1">Host nucleus</location>
    </subcellularLocation>
</comment>
<comment type="similarity">
    <text evidence="1">Belongs to the herpesviridae TRX2 protein family.</text>
</comment>
<organism>
    <name type="scientific">Saimiriine herpesvirus 2 (strain 11)</name>
    <name type="common">SaHV-2</name>
    <name type="synonym">Herpesvirus saimiri</name>
    <dbReference type="NCBI Taxonomy" id="10383"/>
    <lineage>
        <taxon>Viruses</taxon>
        <taxon>Duplodnaviria</taxon>
        <taxon>Heunggongvirae</taxon>
        <taxon>Peploviricota</taxon>
        <taxon>Herviviricetes</taxon>
        <taxon>Herpesvirales</taxon>
        <taxon>Orthoherpesviridae</taxon>
        <taxon>Gammaherpesvirinae</taxon>
        <taxon>Rhadinovirus</taxon>
        <taxon>Rhadinovirus saimiriinegamma2</taxon>
        <taxon>Saimiriine herpesvirus 2</taxon>
    </lineage>
</organism>
<reference key="1">
    <citation type="journal article" date="1992" name="J. Virol.">
        <title>Primary structure of the herpesvirus saimiri genome.</title>
        <authorList>
            <person name="Albrecht J.-C."/>
            <person name="Nicholas J."/>
            <person name="Biller D."/>
            <person name="Cameron K.R."/>
            <person name="Biesinger B."/>
            <person name="Newman C."/>
            <person name="Wittmann S."/>
            <person name="Craxton M.A."/>
            <person name="Coleman H."/>
            <person name="Fleckenstein B."/>
            <person name="Honess R.W."/>
        </authorList>
    </citation>
    <scope>NUCLEOTIDE SEQUENCE [LARGE SCALE GENOMIC DNA]</scope>
</reference>